<protein>
    <recommendedName>
        <fullName>Septin-12</fullName>
    </recommendedName>
</protein>
<sequence>MDERRTPSPCSSRPSSPRTPPCEMFGPVGIEAVLDQLRIKAMKTGFEFNIMVVGQSGLGKSTMVNTLFKSKVWQSPAPNLDVPMPQTLELHSVTHVIEEKGLKLKLTVTDTPGFGDQINNDKCWDPILSYINQQYEQYLQEELLITRQRHIPDTRVHCCVYFVPPTGHCLRPLDIEFLRRLCRTVNVVPVIARADSLTIEERDAFRSRIQQNLKNHCIDVYPQQCFDEDINDRLLNSKIREQIPFAVVGADREHIVNGRCVLGRKTKWGIIEVENMAHCEFLLLRDLLIRSHLQDLKDITHNVHYENYRVLRLNESHVLPRGPGWVNLAPASPGQLMAPGPEKVRKRSKDPRDDEC</sequence>
<proteinExistence type="evidence at protein level"/>
<accession>Q4V8G5</accession>
<feature type="chain" id="PRO_0000312861" description="Septin-12">
    <location>
        <begin position="1"/>
        <end position="356"/>
    </location>
</feature>
<feature type="domain" description="Septin-type G" evidence="4">
    <location>
        <begin position="44"/>
        <end position="315"/>
    </location>
</feature>
<feature type="region of interest" description="Disordered" evidence="5">
    <location>
        <begin position="1"/>
        <end position="23"/>
    </location>
</feature>
<feature type="region of interest" description="Interaction with SEPTIN7" evidence="2">
    <location>
        <begin position="44"/>
        <end position="317"/>
    </location>
</feature>
<feature type="region of interest" description="G1 motif" evidence="4">
    <location>
        <begin position="54"/>
        <end position="61"/>
    </location>
</feature>
<feature type="region of interest" description="G3 motif" evidence="4">
    <location>
        <begin position="110"/>
        <end position="113"/>
    </location>
</feature>
<feature type="region of interest" description="G4 motif" evidence="4">
    <location>
        <begin position="192"/>
        <end position="195"/>
    </location>
</feature>
<feature type="region of interest" description="Self-association (via N-terminus) to polymerize octameric septin 12-7-6-2/4-2/4-6-7-12 filaments" evidence="2">
    <location>
        <begin position="256"/>
        <end position="356"/>
    </location>
</feature>
<feature type="region of interest" description="Disordered" evidence="5">
    <location>
        <begin position="330"/>
        <end position="356"/>
    </location>
</feature>
<feature type="compositionally biased region" description="Low complexity" evidence="5">
    <location>
        <begin position="7"/>
        <end position="16"/>
    </location>
</feature>
<feature type="binding site" evidence="1">
    <location>
        <begin position="54"/>
        <end position="61"/>
    </location>
    <ligand>
        <name>GTP</name>
        <dbReference type="ChEBI" id="CHEBI:37565"/>
    </ligand>
</feature>
<feature type="binding site" evidence="1">
    <location>
        <position position="87"/>
    </location>
    <ligand>
        <name>GTP</name>
        <dbReference type="ChEBI" id="CHEBI:37565"/>
    </ligand>
</feature>
<feature type="binding site" evidence="1">
    <location>
        <position position="113"/>
    </location>
    <ligand>
        <name>GTP</name>
        <dbReference type="ChEBI" id="CHEBI:37565"/>
    </ligand>
</feature>
<feature type="binding site" evidence="1">
    <location>
        <begin position="193"/>
        <end position="201"/>
    </location>
    <ligand>
        <name>GTP</name>
        <dbReference type="ChEBI" id="CHEBI:37565"/>
    </ligand>
</feature>
<feature type="binding site" evidence="1">
    <location>
        <position position="249"/>
    </location>
    <ligand>
        <name>GTP</name>
        <dbReference type="ChEBI" id="CHEBI:37565"/>
    </ligand>
</feature>
<feature type="binding site" evidence="1">
    <location>
        <position position="264"/>
    </location>
    <ligand>
        <name>GTP</name>
        <dbReference type="ChEBI" id="CHEBI:37565"/>
    </ligand>
</feature>
<feature type="mutagenesis site" description="Abolishes homodimerization." evidence="6">
    <original>S</original>
    <variation>N</variation>
    <location>
        <position position="61"/>
    </location>
</feature>
<gene>
    <name evidence="2" type="primary">Septin12</name>
    <name evidence="8" type="synonym">Sept12</name>
</gene>
<comment type="function">
    <text evidence="1 2 3 7">Filament-forming cytoskeletal GTPase (By similarity). May play a role in cytokinesis (Potential). Involved in spermatogenesis. Involved in the morphogenesis of sperm heads and the elongation of sperm tails probably implicating the association with alpha- and beta-tubulins. Forms a filamentous structure with SEPTIN7, SEPTIN6, SEPTIN2 and probably SEPTIN4 at the sperm annulus which is required for the structural integrity and motility of the sperm tail during postmeiotic differentiation (By similarity).</text>
</comment>
<comment type="subunit">
    <text evidence="1 2">Septins polymerize into heterooligomeric protein complexes that form filaments, and can associate with cellular membranes, actin filaments and microtubules. GTPase activity is required for filament formation. Interacts with SEPTIN6 and SEPTIN11. Self-associates. Component of a octameric complex consisting of SEPTIN12, SEPTIN7, SEPTIN6 and SEPTIN2 or SEPTIN4 in the order 12-7-6-2-2-6-7-12 or 12-7-6-4-4-6-7-12 and located in the sperm annulus; the octamer polymerizes into filaments via the SEPTIN12 N- and C-termini; the SEPTIN12:SEPTIN7 association is mediated by the GTP-binding domains. Interacts with SPAG4 and LMNB1. Associates with alpha- and beta-tubulins (By similarity).</text>
</comment>
<comment type="subcellular location">
    <subcellularLocation>
        <location evidence="1">Cytoplasm</location>
    </subcellularLocation>
    <subcellularLocation>
        <location evidence="1">Cytoplasm</location>
        <location evidence="1">Cytoskeleton</location>
    </subcellularLocation>
    <subcellularLocation>
        <location evidence="1">Cytoplasm</location>
        <location evidence="1">Cytoskeleton</location>
        <location evidence="1">Spindle</location>
    </subcellularLocation>
    <subcellularLocation>
        <location evidence="2 3 6">Cell projection</location>
        <location evidence="2 3 6">Cilium</location>
        <location evidence="2 3 6">Flagellum</location>
    </subcellularLocation>
    <text evidence="1 6">At interphase, forms a filamentous structure in the cytoplasm. During anaphase, translocates to the central spindle region and to the midbody during cytokinesis (By similarity). Found in the sperm annulus.</text>
</comment>
<comment type="tissue specificity">
    <text evidence="6">Predominantly expressed in testis and epididymis. Component of the sperm tail annulus (at protein level).</text>
</comment>
<comment type="developmental stage">
    <text evidence="6">In developing testis, expression increases steadily until sexual maturity (approximately 49 days postpartum) where it remains expressed at a relatively constant level.</text>
</comment>
<comment type="similarity">
    <text evidence="4">Belongs to the TRAFAC class TrmE-Era-EngA-EngB-Septin-like GTPase superfamily. Septin GTPase family.</text>
</comment>
<comment type="sequence caution" evidence="7">
    <conflict type="erroneous initiation">
        <sequence resource="EMBL-CDS" id="AAH97401"/>
    </conflict>
</comment>
<evidence type="ECO:0000250" key="1"/>
<evidence type="ECO:0000250" key="2">
    <source>
        <dbReference type="UniProtKB" id="Q8IYM1"/>
    </source>
</evidence>
<evidence type="ECO:0000250" key="3">
    <source>
        <dbReference type="UniProtKB" id="Q9D451"/>
    </source>
</evidence>
<evidence type="ECO:0000255" key="4">
    <source>
        <dbReference type="PROSITE-ProRule" id="PRU01056"/>
    </source>
</evidence>
<evidence type="ECO:0000256" key="5">
    <source>
        <dbReference type="SAM" id="MobiDB-lite"/>
    </source>
</evidence>
<evidence type="ECO:0000269" key="6">
    <source>
    </source>
</evidence>
<evidence type="ECO:0000305" key="7"/>
<evidence type="ECO:0000312" key="8">
    <source>
        <dbReference type="RGD" id="1565511"/>
    </source>
</evidence>
<keyword id="KW-0131">Cell cycle</keyword>
<keyword id="KW-0132">Cell division</keyword>
<keyword id="KW-0966">Cell projection</keyword>
<keyword id="KW-0969">Cilium</keyword>
<keyword id="KW-0963">Cytoplasm</keyword>
<keyword id="KW-0206">Cytoskeleton</keyword>
<keyword id="KW-0221">Differentiation</keyword>
<keyword id="KW-0282">Flagellum</keyword>
<keyword id="KW-0342">GTP-binding</keyword>
<keyword id="KW-0547">Nucleotide-binding</keyword>
<keyword id="KW-1185">Reference proteome</keyword>
<keyword id="KW-0744">Spermatogenesis</keyword>
<organism>
    <name type="scientific">Rattus norvegicus</name>
    <name type="common">Rat</name>
    <dbReference type="NCBI Taxonomy" id="10116"/>
    <lineage>
        <taxon>Eukaryota</taxon>
        <taxon>Metazoa</taxon>
        <taxon>Chordata</taxon>
        <taxon>Craniata</taxon>
        <taxon>Vertebrata</taxon>
        <taxon>Euteleostomi</taxon>
        <taxon>Mammalia</taxon>
        <taxon>Eutheria</taxon>
        <taxon>Euarchontoglires</taxon>
        <taxon>Glires</taxon>
        <taxon>Rodentia</taxon>
        <taxon>Myomorpha</taxon>
        <taxon>Muroidea</taxon>
        <taxon>Muridae</taxon>
        <taxon>Murinae</taxon>
        <taxon>Rattus</taxon>
    </lineage>
</organism>
<reference key="1">
    <citation type="journal article" date="2007" name="Cell Motil. Cytoskeleton">
        <title>Sept12 is a component of the mammalian sperm tail annulus.</title>
        <authorList>
            <person name="Steels J.D."/>
            <person name="Estey M.P."/>
            <person name="Froese C.D."/>
            <person name="Reynaud D."/>
            <person name="Pace-Asciak C."/>
            <person name="Trimble W.S."/>
        </authorList>
    </citation>
    <scope>NUCLEOTIDE SEQUENCE [MRNA]</scope>
    <scope>HOMODIMERIZATION</scope>
    <scope>TISSUE SPECIFICITY</scope>
    <scope>DEVELOPMENTAL STAGE</scope>
    <scope>MUTAGENESIS OF SER-61</scope>
</reference>
<reference key="2">
    <citation type="journal article" date="2004" name="Genome Res.">
        <title>The status, quality, and expansion of the NIH full-length cDNA project: the Mammalian Gene Collection (MGC).</title>
        <authorList>
            <consortium name="The MGC Project Team"/>
        </authorList>
    </citation>
    <scope>NUCLEOTIDE SEQUENCE [LARGE SCALE MRNA]</scope>
    <source>
        <tissue>Testis</tissue>
    </source>
</reference>
<dbReference type="EMBL" id="BC097401">
    <property type="protein sequence ID" value="AAH97401.1"/>
    <property type="status" value="ALT_INIT"/>
    <property type="molecule type" value="mRNA"/>
</dbReference>
<dbReference type="RefSeq" id="NP_001094335.1">
    <property type="nucleotide sequence ID" value="NM_001100865.1"/>
</dbReference>
<dbReference type="SMR" id="Q4V8G5"/>
<dbReference type="FunCoup" id="Q4V8G5">
    <property type="interactions" value="13"/>
</dbReference>
<dbReference type="IntAct" id="Q4V8G5">
    <property type="interactions" value="1"/>
</dbReference>
<dbReference type="STRING" id="10116.ENSRNOP00000057921"/>
<dbReference type="PhosphoSitePlus" id="Q4V8G5"/>
<dbReference type="PaxDb" id="10116-ENSRNOP00000057921"/>
<dbReference type="Ensembl" id="ENSRNOT00000061208.3">
    <property type="protein sequence ID" value="ENSRNOP00000057921.1"/>
    <property type="gene ID" value="ENSRNOG00000003137.7"/>
</dbReference>
<dbReference type="GeneID" id="363542"/>
<dbReference type="KEGG" id="rno:363542"/>
<dbReference type="UCSC" id="RGD:1565511">
    <property type="organism name" value="rat"/>
</dbReference>
<dbReference type="AGR" id="RGD:1565511"/>
<dbReference type="CTD" id="124404"/>
<dbReference type="RGD" id="1565511">
    <property type="gene designation" value="Septin12"/>
</dbReference>
<dbReference type="eggNOG" id="KOG1547">
    <property type="taxonomic scope" value="Eukaryota"/>
</dbReference>
<dbReference type="GeneTree" id="ENSGT00940000158310"/>
<dbReference type="HOGENOM" id="CLU_017718_7_1_1"/>
<dbReference type="InParanoid" id="Q4V8G5"/>
<dbReference type="OMA" id="QHHIPDT"/>
<dbReference type="OrthoDB" id="416553at2759"/>
<dbReference type="PhylomeDB" id="Q4V8G5"/>
<dbReference type="TreeFam" id="TF101078"/>
<dbReference type="PRO" id="PR:Q4V8G5"/>
<dbReference type="Proteomes" id="UP000002494">
    <property type="component" value="Chromosome 10"/>
</dbReference>
<dbReference type="Bgee" id="ENSRNOG00000003137">
    <property type="expression patterns" value="Expressed in testis and 2 other cell types or tissues"/>
</dbReference>
<dbReference type="GO" id="GO:0032153">
    <property type="term" value="C:cell division site"/>
    <property type="evidence" value="ECO:0000318"/>
    <property type="project" value="GO_Central"/>
</dbReference>
<dbReference type="GO" id="GO:0015630">
    <property type="term" value="C:microtubule cytoskeleton"/>
    <property type="evidence" value="ECO:0000318"/>
    <property type="project" value="GO_Central"/>
</dbReference>
<dbReference type="GO" id="GO:0030496">
    <property type="term" value="C:midbody"/>
    <property type="evidence" value="ECO:0000250"/>
    <property type="project" value="UniProtKB"/>
</dbReference>
<dbReference type="GO" id="GO:0048471">
    <property type="term" value="C:perinuclear region of cytoplasm"/>
    <property type="evidence" value="ECO:0000250"/>
    <property type="project" value="UniProtKB"/>
</dbReference>
<dbReference type="GO" id="GO:0031105">
    <property type="term" value="C:septin complex"/>
    <property type="evidence" value="ECO:0000266"/>
    <property type="project" value="RGD"/>
</dbReference>
<dbReference type="GO" id="GO:0005940">
    <property type="term" value="C:septin ring"/>
    <property type="evidence" value="ECO:0000318"/>
    <property type="project" value="GO_Central"/>
</dbReference>
<dbReference type="GO" id="GO:0097227">
    <property type="term" value="C:sperm annulus"/>
    <property type="evidence" value="ECO:0000266"/>
    <property type="project" value="RGD"/>
</dbReference>
<dbReference type="GO" id="GO:0005819">
    <property type="term" value="C:spindle"/>
    <property type="evidence" value="ECO:0000250"/>
    <property type="project" value="UniProtKB"/>
</dbReference>
<dbReference type="GO" id="GO:0005525">
    <property type="term" value="F:GTP binding"/>
    <property type="evidence" value="ECO:0000250"/>
    <property type="project" value="UniProtKB"/>
</dbReference>
<dbReference type="GO" id="GO:0003924">
    <property type="term" value="F:GTPase activity"/>
    <property type="evidence" value="ECO:0000318"/>
    <property type="project" value="GO_Central"/>
</dbReference>
<dbReference type="GO" id="GO:0042802">
    <property type="term" value="F:identical protein binding"/>
    <property type="evidence" value="ECO:0000266"/>
    <property type="project" value="RGD"/>
</dbReference>
<dbReference type="GO" id="GO:0060090">
    <property type="term" value="F:molecular adaptor activity"/>
    <property type="evidence" value="ECO:0000318"/>
    <property type="project" value="GO_Central"/>
</dbReference>
<dbReference type="GO" id="GO:0042803">
    <property type="term" value="F:protein homodimerization activity"/>
    <property type="evidence" value="ECO:0000250"/>
    <property type="project" value="UniProtKB"/>
</dbReference>
<dbReference type="GO" id="GO:0030154">
    <property type="term" value="P:cell differentiation"/>
    <property type="evidence" value="ECO:0007669"/>
    <property type="project" value="UniProtKB-KW"/>
</dbReference>
<dbReference type="GO" id="GO:0061640">
    <property type="term" value="P:cytoskeleton-dependent cytokinesis"/>
    <property type="evidence" value="ECO:0000318"/>
    <property type="project" value="GO_Central"/>
</dbReference>
<dbReference type="GO" id="GO:0008104">
    <property type="term" value="P:protein localization"/>
    <property type="evidence" value="ECO:0000318"/>
    <property type="project" value="GO_Central"/>
</dbReference>
<dbReference type="GO" id="GO:0007283">
    <property type="term" value="P:spermatogenesis"/>
    <property type="evidence" value="ECO:0007669"/>
    <property type="project" value="UniProtKB-KW"/>
</dbReference>
<dbReference type="CDD" id="cd01850">
    <property type="entry name" value="CDC_Septin"/>
    <property type="match status" value="1"/>
</dbReference>
<dbReference type="FunFam" id="3.40.50.300:FF:002706">
    <property type="entry name" value="SEPT3 isoform 5"/>
    <property type="match status" value="1"/>
</dbReference>
<dbReference type="FunFam" id="3.40.50.300:FF:001781">
    <property type="entry name" value="septin-12 isoform X2"/>
    <property type="match status" value="1"/>
</dbReference>
<dbReference type="Gene3D" id="3.40.50.300">
    <property type="entry name" value="P-loop containing nucleotide triphosphate hydrolases"/>
    <property type="match status" value="1"/>
</dbReference>
<dbReference type="InterPro" id="IPR030379">
    <property type="entry name" value="G_SEPTIN_dom"/>
</dbReference>
<dbReference type="InterPro" id="IPR027417">
    <property type="entry name" value="P-loop_NTPase"/>
</dbReference>
<dbReference type="InterPro" id="IPR016491">
    <property type="entry name" value="Septin"/>
</dbReference>
<dbReference type="PANTHER" id="PTHR18884">
    <property type="entry name" value="SEPTIN"/>
    <property type="match status" value="1"/>
</dbReference>
<dbReference type="Pfam" id="PF00735">
    <property type="entry name" value="Septin"/>
    <property type="match status" value="1"/>
</dbReference>
<dbReference type="PIRSF" id="PIRSF006698">
    <property type="entry name" value="Septin"/>
    <property type="match status" value="1"/>
</dbReference>
<dbReference type="SUPFAM" id="SSF52540">
    <property type="entry name" value="P-loop containing nucleoside triphosphate hydrolases"/>
    <property type="match status" value="1"/>
</dbReference>
<dbReference type="PROSITE" id="PS51719">
    <property type="entry name" value="G_SEPTIN"/>
    <property type="match status" value="1"/>
</dbReference>
<name>SEP12_RAT</name>